<organism>
    <name type="scientific">Corynebacterium glutamicum (strain ATCC 13032 / DSM 20300 / JCM 1318 / BCRC 11384 / CCUG 27702 / LMG 3730 / NBRC 12168 / NCIMB 10025 / NRRL B-2784 / 534)</name>
    <dbReference type="NCBI Taxonomy" id="196627"/>
    <lineage>
        <taxon>Bacteria</taxon>
        <taxon>Bacillati</taxon>
        <taxon>Actinomycetota</taxon>
        <taxon>Actinomycetes</taxon>
        <taxon>Mycobacteriales</taxon>
        <taxon>Corynebacteriaceae</taxon>
        <taxon>Corynebacterium</taxon>
    </lineage>
</organism>
<protein>
    <recommendedName>
        <fullName evidence="1">Peptide deformylase 1</fullName>
        <shortName evidence="1">PDF 1</shortName>
        <ecNumber evidence="1">3.5.1.88</ecNumber>
    </recommendedName>
    <alternativeName>
        <fullName evidence="1">Polypeptide deformylase 1</fullName>
    </alternativeName>
</protein>
<name>DEF1_CORGL</name>
<accession>Q8NQ46</accession>
<dbReference type="EC" id="3.5.1.88" evidence="1"/>
<dbReference type="EMBL" id="BA000036">
    <property type="protein sequence ID" value="BAB98994.1"/>
    <property type="molecule type" value="Genomic_DNA"/>
</dbReference>
<dbReference type="EMBL" id="BX927152">
    <property type="protein sequence ID" value="CAF21609.1"/>
    <property type="molecule type" value="Genomic_DNA"/>
</dbReference>
<dbReference type="RefSeq" id="NP_600815.1">
    <property type="nucleotide sequence ID" value="NC_003450.3"/>
</dbReference>
<dbReference type="SMR" id="Q8NQ46"/>
<dbReference type="STRING" id="196627.cg1804"/>
<dbReference type="KEGG" id="cgb:cg1804"/>
<dbReference type="KEGG" id="cgl:Cgl1601"/>
<dbReference type="PATRIC" id="fig|196627.13.peg.1563"/>
<dbReference type="eggNOG" id="COG0242">
    <property type="taxonomic scope" value="Bacteria"/>
</dbReference>
<dbReference type="HOGENOM" id="CLU_061901_1_2_11"/>
<dbReference type="OrthoDB" id="9804313at2"/>
<dbReference type="BioCyc" id="CORYNE:G18NG-11186-MONOMER"/>
<dbReference type="Proteomes" id="UP000000582">
    <property type="component" value="Chromosome"/>
</dbReference>
<dbReference type="Proteomes" id="UP000001009">
    <property type="component" value="Chromosome"/>
</dbReference>
<dbReference type="GO" id="GO:0046872">
    <property type="term" value="F:metal ion binding"/>
    <property type="evidence" value="ECO:0007669"/>
    <property type="project" value="UniProtKB-KW"/>
</dbReference>
<dbReference type="GO" id="GO:0042586">
    <property type="term" value="F:peptide deformylase activity"/>
    <property type="evidence" value="ECO:0007669"/>
    <property type="project" value="UniProtKB-UniRule"/>
</dbReference>
<dbReference type="GO" id="GO:0043686">
    <property type="term" value="P:co-translational protein modification"/>
    <property type="evidence" value="ECO:0007669"/>
    <property type="project" value="TreeGrafter"/>
</dbReference>
<dbReference type="GO" id="GO:0006412">
    <property type="term" value="P:translation"/>
    <property type="evidence" value="ECO:0007669"/>
    <property type="project" value="UniProtKB-UniRule"/>
</dbReference>
<dbReference type="CDD" id="cd00487">
    <property type="entry name" value="Pep_deformylase"/>
    <property type="match status" value="1"/>
</dbReference>
<dbReference type="Gene3D" id="3.90.45.10">
    <property type="entry name" value="Peptide deformylase"/>
    <property type="match status" value="1"/>
</dbReference>
<dbReference type="HAMAP" id="MF_00163">
    <property type="entry name" value="Pep_deformylase"/>
    <property type="match status" value="1"/>
</dbReference>
<dbReference type="InterPro" id="IPR023635">
    <property type="entry name" value="Peptide_deformylase"/>
</dbReference>
<dbReference type="InterPro" id="IPR036821">
    <property type="entry name" value="Peptide_deformylase_sf"/>
</dbReference>
<dbReference type="NCBIfam" id="TIGR00079">
    <property type="entry name" value="pept_deformyl"/>
    <property type="match status" value="1"/>
</dbReference>
<dbReference type="NCBIfam" id="NF001159">
    <property type="entry name" value="PRK00150.1-3"/>
    <property type="match status" value="1"/>
</dbReference>
<dbReference type="PANTHER" id="PTHR10458">
    <property type="entry name" value="PEPTIDE DEFORMYLASE"/>
    <property type="match status" value="1"/>
</dbReference>
<dbReference type="PANTHER" id="PTHR10458:SF2">
    <property type="entry name" value="PEPTIDE DEFORMYLASE, MITOCHONDRIAL"/>
    <property type="match status" value="1"/>
</dbReference>
<dbReference type="Pfam" id="PF01327">
    <property type="entry name" value="Pep_deformylase"/>
    <property type="match status" value="1"/>
</dbReference>
<dbReference type="PIRSF" id="PIRSF004749">
    <property type="entry name" value="Pep_def"/>
    <property type="match status" value="1"/>
</dbReference>
<dbReference type="PRINTS" id="PR01576">
    <property type="entry name" value="PDEFORMYLASE"/>
</dbReference>
<dbReference type="SUPFAM" id="SSF56420">
    <property type="entry name" value="Peptide deformylase"/>
    <property type="match status" value="1"/>
</dbReference>
<sequence length="169" mass="18543">MAVREVRLFGDPVLVSRADEVVDFDESLSTLIDDMFDTMEDAGGVGLAANQVGVLRRVFVFDTSHQEGGLRGHVINPVWEPLTEDTQTGKEGCLSIPDVSAETTRYETVRLSGQDRDGNPVGFVANGLLARCIQHETDHLDGVLFLKRLDPAERKAAMGVIRASAWFNK</sequence>
<evidence type="ECO:0000255" key="1">
    <source>
        <dbReference type="HAMAP-Rule" id="MF_00163"/>
    </source>
</evidence>
<keyword id="KW-0378">Hydrolase</keyword>
<keyword id="KW-0408">Iron</keyword>
<keyword id="KW-0479">Metal-binding</keyword>
<keyword id="KW-0648">Protein biosynthesis</keyword>
<keyword id="KW-1185">Reference proteome</keyword>
<feature type="chain" id="PRO_0000082774" description="Peptide deformylase 1">
    <location>
        <begin position="1"/>
        <end position="169"/>
    </location>
</feature>
<feature type="active site" evidence="1">
    <location>
        <position position="136"/>
    </location>
</feature>
<feature type="binding site" evidence="1">
    <location>
        <position position="93"/>
    </location>
    <ligand>
        <name>Fe cation</name>
        <dbReference type="ChEBI" id="CHEBI:24875"/>
    </ligand>
</feature>
<feature type="binding site" evidence="1">
    <location>
        <position position="135"/>
    </location>
    <ligand>
        <name>Fe cation</name>
        <dbReference type="ChEBI" id="CHEBI:24875"/>
    </ligand>
</feature>
<feature type="binding site" evidence="1">
    <location>
        <position position="139"/>
    </location>
    <ligand>
        <name>Fe cation</name>
        <dbReference type="ChEBI" id="CHEBI:24875"/>
    </ligand>
</feature>
<comment type="function">
    <text evidence="1">Removes the formyl group from the N-terminal Met of newly synthesized proteins. Requires at least a dipeptide for an efficient rate of reaction. N-terminal L-methionine is a prerequisite for activity but the enzyme has broad specificity at other positions.</text>
</comment>
<comment type="catalytic activity">
    <reaction evidence="1">
        <text>N-terminal N-formyl-L-methionyl-[peptide] + H2O = N-terminal L-methionyl-[peptide] + formate</text>
        <dbReference type="Rhea" id="RHEA:24420"/>
        <dbReference type="Rhea" id="RHEA-COMP:10639"/>
        <dbReference type="Rhea" id="RHEA-COMP:10640"/>
        <dbReference type="ChEBI" id="CHEBI:15377"/>
        <dbReference type="ChEBI" id="CHEBI:15740"/>
        <dbReference type="ChEBI" id="CHEBI:49298"/>
        <dbReference type="ChEBI" id="CHEBI:64731"/>
        <dbReference type="EC" id="3.5.1.88"/>
    </reaction>
</comment>
<comment type="cofactor">
    <cofactor evidence="1">
        <name>Fe(2+)</name>
        <dbReference type="ChEBI" id="CHEBI:29033"/>
    </cofactor>
    <text evidence="1">Binds 1 Fe(2+) ion.</text>
</comment>
<comment type="similarity">
    <text evidence="1">Belongs to the polypeptide deformylase family.</text>
</comment>
<proteinExistence type="inferred from homology"/>
<gene>
    <name evidence="1" type="primary">def1</name>
    <name type="ordered locus">Cgl1601</name>
    <name type="ordered locus">cg1804</name>
</gene>
<reference key="1">
    <citation type="journal article" date="2003" name="Appl. Microbiol. Biotechnol.">
        <title>The Corynebacterium glutamicum genome: features and impacts on biotechnological processes.</title>
        <authorList>
            <person name="Ikeda M."/>
            <person name="Nakagawa S."/>
        </authorList>
    </citation>
    <scope>NUCLEOTIDE SEQUENCE [LARGE SCALE GENOMIC DNA]</scope>
    <source>
        <strain>ATCC 13032 / DSM 20300 / JCM 1318 / BCRC 11384 / CCUG 27702 / LMG 3730 / NBRC 12168 / NCIMB 10025 / NRRL B-2784 / 534</strain>
    </source>
</reference>
<reference key="2">
    <citation type="journal article" date="2003" name="J. Biotechnol.">
        <title>The complete Corynebacterium glutamicum ATCC 13032 genome sequence and its impact on the production of L-aspartate-derived amino acids and vitamins.</title>
        <authorList>
            <person name="Kalinowski J."/>
            <person name="Bathe B."/>
            <person name="Bartels D."/>
            <person name="Bischoff N."/>
            <person name="Bott M."/>
            <person name="Burkovski A."/>
            <person name="Dusch N."/>
            <person name="Eggeling L."/>
            <person name="Eikmanns B.J."/>
            <person name="Gaigalat L."/>
            <person name="Goesmann A."/>
            <person name="Hartmann M."/>
            <person name="Huthmacher K."/>
            <person name="Kraemer R."/>
            <person name="Linke B."/>
            <person name="McHardy A.C."/>
            <person name="Meyer F."/>
            <person name="Moeckel B."/>
            <person name="Pfefferle W."/>
            <person name="Puehler A."/>
            <person name="Rey D.A."/>
            <person name="Rueckert C."/>
            <person name="Rupp O."/>
            <person name="Sahm H."/>
            <person name="Wendisch V.F."/>
            <person name="Wiegraebe I."/>
            <person name="Tauch A."/>
        </authorList>
    </citation>
    <scope>NUCLEOTIDE SEQUENCE [LARGE SCALE GENOMIC DNA]</scope>
    <source>
        <strain>ATCC 13032 / DSM 20300 / JCM 1318 / BCRC 11384 / CCUG 27702 / LMG 3730 / NBRC 12168 / NCIMB 10025 / NRRL B-2784 / 534</strain>
    </source>
</reference>